<feature type="chain" id="PRO_0000288910" description="GATA zinc finger domain-containing protein 1">
    <location>
        <begin position="1"/>
        <end position="266"/>
    </location>
</feature>
<feature type="zinc finger region" description="GATA-type" evidence="2">
    <location>
        <begin position="9"/>
        <end position="33"/>
    </location>
</feature>
<feature type="region of interest" description="Disordered" evidence="3">
    <location>
        <begin position="59"/>
        <end position="112"/>
    </location>
</feature>
<feature type="compositionally biased region" description="Low complexity" evidence="3">
    <location>
        <begin position="59"/>
        <end position="72"/>
    </location>
</feature>
<feature type="cross-link" description="Glycyl lysine isopeptide (Lys-Gly) (interchain with G-Cter in SUMO2)" evidence="1">
    <location>
        <position position="259"/>
    </location>
</feature>
<feature type="splice variant" id="VSP_025823" description="In isoform 2." evidence="6">
    <original>PEEDLPRKMEYLEF</original>
    <variation>EAQHLRFTSFFSAL</variation>
    <location>
        <begin position="205"/>
        <end position="218"/>
    </location>
</feature>
<feature type="splice variant" id="VSP_025824" description="In isoform 2." evidence="6">
    <location>
        <begin position="219"/>
        <end position="266"/>
    </location>
</feature>
<feature type="sequence conflict" description="In Ref. 1; BAB69047." evidence="7" ref="1">
    <original>T</original>
    <variation>A</variation>
    <location>
        <position position="60"/>
    </location>
</feature>
<feature type="sequence conflict" description="In Ref. 2; BAB28550." evidence="7" ref="2">
    <original>D</original>
    <variation>G</variation>
    <location>
        <position position="194"/>
    </location>
</feature>
<name>GATD1_MOUSE</name>
<reference key="1">
    <citation type="journal article" date="2002" name="Gene">
        <title>Ocular development-associated gene (ODAG), a novel gene highly expressed in ocular development.</title>
        <authorList>
            <person name="Tsuruga T."/>
            <person name="Kanamoto T."/>
            <person name="Kato T."/>
            <person name="Yamashita H."/>
            <person name="Miyagawa K."/>
            <person name="Mishima H.K."/>
        </authorList>
    </citation>
    <scope>NUCLEOTIDE SEQUENCE [MRNA] (ISOFORM 1)</scope>
    <scope>TISSUE SPECIFICITY</scope>
    <scope>DEVELOPMENTAL STAGE</scope>
    <source>
        <tissue>Brain</tissue>
    </source>
</reference>
<reference key="2">
    <citation type="journal article" date="2005" name="Science">
        <title>The transcriptional landscape of the mammalian genome.</title>
        <authorList>
            <person name="Carninci P."/>
            <person name="Kasukawa T."/>
            <person name="Katayama S."/>
            <person name="Gough J."/>
            <person name="Frith M.C."/>
            <person name="Maeda N."/>
            <person name="Oyama R."/>
            <person name="Ravasi T."/>
            <person name="Lenhard B."/>
            <person name="Wells C."/>
            <person name="Kodzius R."/>
            <person name="Shimokawa K."/>
            <person name="Bajic V.B."/>
            <person name="Brenner S.E."/>
            <person name="Batalov S."/>
            <person name="Forrest A.R."/>
            <person name="Zavolan M."/>
            <person name="Davis M.J."/>
            <person name="Wilming L.G."/>
            <person name="Aidinis V."/>
            <person name="Allen J.E."/>
            <person name="Ambesi-Impiombato A."/>
            <person name="Apweiler R."/>
            <person name="Aturaliya R.N."/>
            <person name="Bailey T.L."/>
            <person name="Bansal M."/>
            <person name="Baxter L."/>
            <person name="Beisel K.W."/>
            <person name="Bersano T."/>
            <person name="Bono H."/>
            <person name="Chalk A.M."/>
            <person name="Chiu K.P."/>
            <person name="Choudhary V."/>
            <person name="Christoffels A."/>
            <person name="Clutterbuck D.R."/>
            <person name="Crowe M.L."/>
            <person name="Dalla E."/>
            <person name="Dalrymple B.P."/>
            <person name="de Bono B."/>
            <person name="Della Gatta G."/>
            <person name="di Bernardo D."/>
            <person name="Down T."/>
            <person name="Engstrom P."/>
            <person name="Fagiolini M."/>
            <person name="Faulkner G."/>
            <person name="Fletcher C.F."/>
            <person name="Fukushima T."/>
            <person name="Furuno M."/>
            <person name="Futaki S."/>
            <person name="Gariboldi M."/>
            <person name="Georgii-Hemming P."/>
            <person name="Gingeras T.R."/>
            <person name="Gojobori T."/>
            <person name="Green R.E."/>
            <person name="Gustincich S."/>
            <person name="Harbers M."/>
            <person name="Hayashi Y."/>
            <person name="Hensch T.K."/>
            <person name="Hirokawa N."/>
            <person name="Hill D."/>
            <person name="Huminiecki L."/>
            <person name="Iacono M."/>
            <person name="Ikeo K."/>
            <person name="Iwama A."/>
            <person name="Ishikawa T."/>
            <person name="Jakt M."/>
            <person name="Kanapin A."/>
            <person name="Katoh M."/>
            <person name="Kawasawa Y."/>
            <person name="Kelso J."/>
            <person name="Kitamura H."/>
            <person name="Kitano H."/>
            <person name="Kollias G."/>
            <person name="Krishnan S.P."/>
            <person name="Kruger A."/>
            <person name="Kummerfeld S.K."/>
            <person name="Kurochkin I.V."/>
            <person name="Lareau L.F."/>
            <person name="Lazarevic D."/>
            <person name="Lipovich L."/>
            <person name="Liu J."/>
            <person name="Liuni S."/>
            <person name="McWilliam S."/>
            <person name="Madan Babu M."/>
            <person name="Madera M."/>
            <person name="Marchionni L."/>
            <person name="Matsuda H."/>
            <person name="Matsuzawa S."/>
            <person name="Miki H."/>
            <person name="Mignone F."/>
            <person name="Miyake S."/>
            <person name="Morris K."/>
            <person name="Mottagui-Tabar S."/>
            <person name="Mulder N."/>
            <person name="Nakano N."/>
            <person name="Nakauchi H."/>
            <person name="Ng P."/>
            <person name="Nilsson R."/>
            <person name="Nishiguchi S."/>
            <person name="Nishikawa S."/>
            <person name="Nori F."/>
            <person name="Ohara O."/>
            <person name="Okazaki Y."/>
            <person name="Orlando V."/>
            <person name="Pang K.C."/>
            <person name="Pavan W.J."/>
            <person name="Pavesi G."/>
            <person name="Pesole G."/>
            <person name="Petrovsky N."/>
            <person name="Piazza S."/>
            <person name="Reed J."/>
            <person name="Reid J.F."/>
            <person name="Ring B.Z."/>
            <person name="Ringwald M."/>
            <person name="Rost B."/>
            <person name="Ruan Y."/>
            <person name="Salzberg S.L."/>
            <person name="Sandelin A."/>
            <person name="Schneider C."/>
            <person name="Schoenbach C."/>
            <person name="Sekiguchi K."/>
            <person name="Semple C.A."/>
            <person name="Seno S."/>
            <person name="Sessa L."/>
            <person name="Sheng Y."/>
            <person name="Shibata Y."/>
            <person name="Shimada H."/>
            <person name="Shimada K."/>
            <person name="Silva D."/>
            <person name="Sinclair B."/>
            <person name="Sperling S."/>
            <person name="Stupka E."/>
            <person name="Sugiura K."/>
            <person name="Sultana R."/>
            <person name="Takenaka Y."/>
            <person name="Taki K."/>
            <person name="Tammoja K."/>
            <person name="Tan S.L."/>
            <person name="Tang S."/>
            <person name="Taylor M.S."/>
            <person name="Tegner J."/>
            <person name="Teichmann S.A."/>
            <person name="Ueda H.R."/>
            <person name="van Nimwegen E."/>
            <person name="Verardo R."/>
            <person name="Wei C.L."/>
            <person name="Yagi K."/>
            <person name="Yamanishi H."/>
            <person name="Zabarovsky E."/>
            <person name="Zhu S."/>
            <person name="Zimmer A."/>
            <person name="Hide W."/>
            <person name="Bult C."/>
            <person name="Grimmond S.M."/>
            <person name="Teasdale R.D."/>
            <person name="Liu E.T."/>
            <person name="Brusic V."/>
            <person name="Quackenbush J."/>
            <person name="Wahlestedt C."/>
            <person name="Mattick J.S."/>
            <person name="Hume D.A."/>
            <person name="Kai C."/>
            <person name="Sasaki D."/>
            <person name="Tomaru Y."/>
            <person name="Fukuda S."/>
            <person name="Kanamori-Katayama M."/>
            <person name="Suzuki M."/>
            <person name="Aoki J."/>
            <person name="Arakawa T."/>
            <person name="Iida J."/>
            <person name="Imamura K."/>
            <person name="Itoh M."/>
            <person name="Kato T."/>
            <person name="Kawaji H."/>
            <person name="Kawagashira N."/>
            <person name="Kawashima T."/>
            <person name="Kojima M."/>
            <person name="Kondo S."/>
            <person name="Konno H."/>
            <person name="Nakano K."/>
            <person name="Ninomiya N."/>
            <person name="Nishio T."/>
            <person name="Okada M."/>
            <person name="Plessy C."/>
            <person name="Shibata K."/>
            <person name="Shiraki T."/>
            <person name="Suzuki S."/>
            <person name="Tagami M."/>
            <person name="Waki K."/>
            <person name="Watahiki A."/>
            <person name="Okamura-Oho Y."/>
            <person name="Suzuki H."/>
            <person name="Kawai J."/>
            <person name="Hayashizaki Y."/>
        </authorList>
    </citation>
    <scope>NUCLEOTIDE SEQUENCE [LARGE SCALE MRNA] (ISOFORM 1)</scope>
    <source>
        <strain>C57BL/6J</strain>
        <tissue>Embryo</tissue>
    </source>
</reference>
<reference key="3">
    <citation type="journal article" date="2004" name="Genome Res.">
        <title>The status, quality, and expansion of the NIH full-length cDNA project: the Mammalian Gene Collection (MGC).</title>
        <authorList>
            <consortium name="The MGC Project Team"/>
        </authorList>
    </citation>
    <scope>NUCLEOTIDE SEQUENCE [LARGE SCALE MRNA] (ISOFORM 2)</scope>
    <source>
        <strain>FVB/N</strain>
        <tissue>Mammary tumor</tissue>
    </source>
</reference>
<reference key="4">
    <citation type="journal article" date="2011" name="Circ. Cardiovasc. Genet.">
        <title>Homozygosity mapping and exome sequencing reveal GATAD1 mutation in autosomal recessive dilated cardiomyopathy.</title>
        <authorList>
            <person name="Theis J.L."/>
            <person name="Sharpe K.M."/>
            <person name="Matsumoto M.E."/>
            <person name="Chai H.S."/>
            <person name="Nair A.A."/>
            <person name="Theis J.D."/>
            <person name="de Andrade M."/>
            <person name="Wieben E.D."/>
            <person name="Michels V.V."/>
            <person name="Olson T.M."/>
        </authorList>
    </citation>
    <scope>DEVELOPMENTAL STAGE</scope>
</reference>
<sequence>MPLGLKPTCSMCKTTSSSMWKKSPQGEILCHHCTGRGGGGAGVAGGTGGGGGGGGGFGTTTFATTSAGPSQSNGGGGGKQSKQEIHRRSARLRNTKYKSAPAAEKKVSTKGKGRRHIFKLKNPIKAPESVSTIVTAESIFYKGVYYQIGDVVSVIDEQDGKPYYAQIRGFIQDQYCEKSAALTWLIPTLASPRDQFDPASYIIGPEEDLPRKMEYLEFVCHAPSEYFKSRSSPFPTVPTRPEKGYIWTHVGPTPAITIKETVANHL</sequence>
<protein>
    <recommendedName>
        <fullName>GATA zinc finger domain-containing protein 1</fullName>
    </recommendedName>
    <alternativeName>
        <fullName>Ocular development-associated gene protein</fullName>
    </alternativeName>
</protein>
<dbReference type="EMBL" id="AB047921">
    <property type="protein sequence ID" value="BAB69047.1"/>
    <property type="molecule type" value="mRNA"/>
</dbReference>
<dbReference type="EMBL" id="AK012921">
    <property type="protein sequence ID" value="BAB28550.2"/>
    <property type="status" value="ALT_SEQ"/>
    <property type="molecule type" value="mRNA"/>
</dbReference>
<dbReference type="EMBL" id="BC019449">
    <property type="protein sequence ID" value="AAH19449.1"/>
    <property type="molecule type" value="mRNA"/>
</dbReference>
<dbReference type="CCDS" id="CCDS19066.1">
    <molecule id="Q920S3-1"/>
</dbReference>
<dbReference type="RefSeq" id="NP_080309.2">
    <molecule id="Q920S3-1"/>
    <property type="nucleotide sequence ID" value="NM_026033.2"/>
</dbReference>
<dbReference type="BioGRID" id="212018">
    <property type="interactions" value="1"/>
</dbReference>
<dbReference type="FunCoup" id="Q920S3">
    <property type="interactions" value="3745"/>
</dbReference>
<dbReference type="STRING" id="10090.ENSMUSP00000007559"/>
<dbReference type="GlyGen" id="Q920S3">
    <property type="glycosylation" value="2 sites"/>
</dbReference>
<dbReference type="iPTMnet" id="Q920S3"/>
<dbReference type="PhosphoSitePlus" id="Q920S3"/>
<dbReference type="jPOST" id="Q920S3"/>
<dbReference type="PaxDb" id="10090-ENSMUSP00000007559"/>
<dbReference type="PeptideAtlas" id="Q920S3"/>
<dbReference type="ProteomicsDB" id="272932">
    <molecule id="Q920S3-1"/>
</dbReference>
<dbReference type="ProteomicsDB" id="272933">
    <molecule id="Q920S3-2"/>
</dbReference>
<dbReference type="Pumba" id="Q920S3"/>
<dbReference type="Antibodypedia" id="1808">
    <property type="antibodies" value="207 antibodies from 22 providers"/>
</dbReference>
<dbReference type="Ensembl" id="ENSMUST00000007559.15">
    <molecule id="Q920S3-1"/>
    <property type="protein sequence ID" value="ENSMUSP00000007559.9"/>
    <property type="gene ID" value="ENSMUSG00000007415.16"/>
</dbReference>
<dbReference type="Ensembl" id="ENSMUST00000119783.2">
    <molecule id="Q920S3-2"/>
    <property type="protein sequence ID" value="ENSMUSP00000113271.2"/>
    <property type="gene ID" value="ENSMUSG00000007415.16"/>
</dbReference>
<dbReference type="GeneID" id="67210"/>
<dbReference type="KEGG" id="mmu:67210"/>
<dbReference type="UCSC" id="uc008whh.2">
    <molecule id="Q920S3-1"/>
    <property type="organism name" value="mouse"/>
</dbReference>
<dbReference type="UCSC" id="uc008whi.2">
    <molecule id="Q920S3-2"/>
    <property type="organism name" value="mouse"/>
</dbReference>
<dbReference type="AGR" id="MGI:1914460"/>
<dbReference type="CTD" id="57798"/>
<dbReference type="MGI" id="MGI:1914460">
    <property type="gene designation" value="Gatad1"/>
</dbReference>
<dbReference type="VEuPathDB" id="HostDB:ENSMUSG00000007415"/>
<dbReference type="eggNOG" id="ENOG502QUY5">
    <property type="taxonomic scope" value="Eukaryota"/>
</dbReference>
<dbReference type="GeneTree" id="ENSGT00390000018554"/>
<dbReference type="HOGENOM" id="CLU_070432_0_0_1"/>
<dbReference type="InParanoid" id="Q920S3"/>
<dbReference type="OMA" id="LLTDQYC"/>
<dbReference type="OrthoDB" id="9994231at2759"/>
<dbReference type="PhylomeDB" id="Q920S3"/>
<dbReference type="TreeFam" id="TF325354"/>
<dbReference type="BioGRID-ORCS" id="67210">
    <property type="hits" value="10 hits in 81 CRISPR screens"/>
</dbReference>
<dbReference type="ChiTaRS" id="Gatad1">
    <property type="organism name" value="mouse"/>
</dbReference>
<dbReference type="PRO" id="PR:Q920S3"/>
<dbReference type="Proteomes" id="UP000000589">
    <property type="component" value="Chromosome 5"/>
</dbReference>
<dbReference type="RNAct" id="Q920S3">
    <property type="molecule type" value="protein"/>
</dbReference>
<dbReference type="Bgee" id="ENSMUSG00000007415">
    <property type="expression patterns" value="Expressed in embryonic post-anal tail and 261 other cell types or tissues"/>
</dbReference>
<dbReference type="ExpressionAtlas" id="Q920S3">
    <property type="expression patterns" value="baseline and differential"/>
</dbReference>
<dbReference type="GO" id="GO:0005654">
    <property type="term" value="C:nucleoplasm"/>
    <property type="evidence" value="ECO:0007669"/>
    <property type="project" value="Ensembl"/>
</dbReference>
<dbReference type="GO" id="GO:0005634">
    <property type="term" value="C:nucleus"/>
    <property type="evidence" value="ECO:0000250"/>
    <property type="project" value="UniProtKB"/>
</dbReference>
<dbReference type="GO" id="GO:0043565">
    <property type="term" value="F:sequence-specific DNA binding"/>
    <property type="evidence" value="ECO:0007669"/>
    <property type="project" value="InterPro"/>
</dbReference>
<dbReference type="GO" id="GO:0008270">
    <property type="term" value="F:zinc ion binding"/>
    <property type="evidence" value="ECO:0007669"/>
    <property type="project" value="UniProtKB-KW"/>
</dbReference>
<dbReference type="GO" id="GO:0006338">
    <property type="term" value="P:chromatin remodeling"/>
    <property type="evidence" value="ECO:0007669"/>
    <property type="project" value="Ensembl"/>
</dbReference>
<dbReference type="GO" id="GO:0006355">
    <property type="term" value="P:regulation of DNA-templated transcription"/>
    <property type="evidence" value="ECO:0007669"/>
    <property type="project" value="InterPro"/>
</dbReference>
<dbReference type="Gene3D" id="3.30.50.10">
    <property type="entry name" value="Erythroid Transcription Factor GATA-1, subunit A"/>
    <property type="match status" value="1"/>
</dbReference>
<dbReference type="InterPro" id="IPR039050">
    <property type="entry name" value="GATAD1"/>
</dbReference>
<dbReference type="InterPro" id="IPR000679">
    <property type="entry name" value="Znf_GATA"/>
</dbReference>
<dbReference type="InterPro" id="IPR013088">
    <property type="entry name" value="Znf_NHR/GATA"/>
</dbReference>
<dbReference type="PANTHER" id="PTHR13340">
    <property type="entry name" value="GATA ZINC FINGER DOMAIN-CONTAINING"/>
    <property type="match status" value="1"/>
</dbReference>
<dbReference type="PANTHER" id="PTHR13340:SF2">
    <property type="entry name" value="GATA ZINC FINGER DOMAIN-CONTAINING PROTEIN 1"/>
    <property type="match status" value="1"/>
</dbReference>
<dbReference type="SUPFAM" id="SSF57716">
    <property type="entry name" value="Glucocorticoid receptor-like (DNA-binding domain)"/>
    <property type="match status" value="1"/>
</dbReference>
<dbReference type="PROSITE" id="PS50114">
    <property type="entry name" value="GATA_ZN_FINGER_2"/>
    <property type="match status" value="1"/>
</dbReference>
<gene>
    <name type="primary">Gatad1</name>
    <name type="synonym">Odag</name>
</gene>
<proteinExistence type="evidence at transcript level"/>
<organism>
    <name type="scientific">Mus musculus</name>
    <name type="common">Mouse</name>
    <dbReference type="NCBI Taxonomy" id="10090"/>
    <lineage>
        <taxon>Eukaryota</taxon>
        <taxon>Metazoa</taxon>
        <taxon>Chordata</taxon>
        <taxon>Craniata</taxon>
        <taxon>Vertebrata</taxon>
        <taxon>Euteleostomi</taxon>
        <taxon>Mammalia</taxon>
        <taxon>Eutheria</taxon>
        <taxon>Euarchontoglires</taxon>
        <taxon>Glires</taxon>
        <taxon>Rodentia</taxon>
        <taxon>Myomorpha</taxon>
        <taxon>Muroidea</taxon>
        <taxon>Muridae</taxon>
        <taxon>Murinae</taxon>
        <taxon>Mus</taxon>
        <taxon>Mus</taxon>
    </lineage>
</organism>
<comment type="function">
    <text evidence="1">Component of some chromatin complex recruited to chromatin sites methylated 'Lys-4' of histone H3 (H3K4me), with a preference for trimethylated form (H3K4me3).</text>
</comment>
<comment type="subunit">
    <text evidence="1">Component of a chromatin complex, at least composed of KDM5A, GATAD1 and EMSY.</text>
</comment>
<comment type="subcellular location">
    <subcellularLocation>
        <location evidence="1">Nucleus</location>
    </subcellularLocation>
</comment>
<comment type="alternative products">
    <event type="alternative splicing"/>
    <isoform>
        <id>Q920S3-1</id>
        <name>1</name>
        <sequence type="displayed"/>
    </isoform>
    <isoform>
        <id>Q920S3-2</id>
        <name>2</name>
        <sequence type="described" ref="VSP_025823 VSP_025824"/>
    </isoform>
</comment>
<comment type="tissue specificity">
    <text evidence="4">Expressed in the eye (lens, ciliary body, retina, sclera and conjunctiva) at postnatal day 2 and 10. Not detected anywhere at postnatal day 14.</text>
</comment>
<comment type="developmental stage">
    <text evidence="4 5">Expressed in embryo at 13 dpc onwards. Expressed in embryonic heart at all stages of development.</text>
</comment>
<comment type="sequence caution" evidence="7">
    <conflict type="erroneous termination">
        <sequence resource="EMBL-CDS" id="BAB28550"/>
    </conflict>
    <text>Truncated C-terminus.</text>
</comment>
<accession>Q920S3</accession>
<accession>Q8VCQ2</accession>
<accession>Q9CSG2</accession>
<keyword id="KW-0025">Alternative splicing</keyword>
<keyword id="KW-1017">Isopeptide bond</keyword>
<keyword id="KW-0479">Metal-binding</keyword>
<keyword id="KW-0539">Nucleus</keyword>
<keyword id="KW-1185">Reference proteome</keyword>
<keyword id="KW-0832">Ubl conjugation</keyword>
<keyword id="KW-0862">Zinc</keyword>
<keyword id="KW-0863">Zinc-finger</keyword>
<evidence type="ECO:0000250" key="1">
    <source>
        <dbReference type="UniProtKB" id="Q8WUU5"/>
    </source>
</evidence>
<evidence type="ECO:0000255" key="2">
    <source>
        <dbReference type="PROSITE-ProRule" id="PRU00094"/>
    </source>
</evidence>
<evidence type="ECO:0000256" key="3">
    <source>
        <dbReference type="SAM" id="MobiDB-lite"/>
    </source>
</evidence>
<evidence type="ECO:0000269" key="4">
    <source>
    </source>
</evidence>
<evidence type="ECO:0000269" key="5">
    <source>
    </source>
</evidence>
<evidence type="ECO:0000303" key="6">
    <source>
    </source>
</evidence>
<evidence type="ECO:0000305" key="7"/>